<proteinExistence type="inferred from homology"/>
<sequence length="453" mass="51966">MSEKEIWEKVLEIAQEKLSAVSYSTFLKDTELYTIKDGEAIVLSSIPFNANWLNQQYAEIIQAILFDVVGYEVKPHFITTEELANYSNNETATPKETTKPSTETTEDNHVLGREQFNAHNTFDTFVIGPGNRFPHAASLAVAEAPAKAYNPLFIYGGVGLGKTHLMHAIGHHVLDNNPDAKVIYTSSEKFTNEFIKSIRDNEGEAFRERYRNIDVLLIDDIQFIQNKVQTQEEFFYTFNELHQNNKQIVISSDRPPKEIAQLEDRLRSRFEWGLIVDITPPDYETRMAILQKKIEEEKLDIPPEALNYIANQIQSNIRELEGALTRLLAYSQLLGKPITTELTAEALKDIIQAPKSKKITIQDIQKIVGQYYNVRIEDFSAKKRTKSIAYPRQIAMYLSRELTDFSLPKIGEEFGGRDHTTVIHAHEKISKDLKEDPIFKQEVENLEKEIRNV</sequence>
<protein>
    <recommendedName>
        <fullName evidence="1">Chromosomal replication initiator protein DnaA</fullName>
    </recommendedName>
</protein>
<feature type="chain" id="PRO_0000114262" description="Chromosomal replication initiator protein DnaA">
    <location>
        <begin position="1"/>
        <end position="453"/>
    </location>
</feature>
<feature type="region of interest" description="Domain I, interacts with DnaA modulators" evidence="1">
    <location>
        <begin position="1"/>
        <end position="71"/>
    </location>
</feature>
<feature type="region of interest" description="Domain II" evidence="1">
    <location>
        <begin position="71"/>
        <end position="114"/>
    </location>
</feature>
<feature type="region of interest" description="Domain III, AAA+ region" evidence="1">
    <location>
        <begin position="115"/>
        <end position="331"/>
    </location>
</feature>
<feature type="region of interest" description="Domain IV, binds dsDNA" evidence="1">
    <location>
        <begin position="332"/>
        <end position="453"/>
    </location>
</feature>
<feature type="binding site" evidence="1">
    <location>
        <position position="159"/>
    </location>
    <ligand>
        <name>ATP</name>
        <dbReference type="ChEBI" id="CHEBI:30616"/>
    </ligand>
</feature>
<feature type="binding site" evidence="1">
    <location>
        <position position="161"/>
    </location>
    <ligand>
        <name>ATP</name>
        <dbReference type="ChEBI" id="CHEBI:30616"/>
    </ligand>
</feature>
<feature type="binding site" evidence="1">
    <location>
        <position position="162"/>
    </location>
    <ligand>
        <name>ATP</name>
        <dbReference type="ChEBI" id="CHEBI:30616"/>
    </ligand>
</feature>
<feature type="binding site" evidence="1">
    <location>
        <position position="163"/>
    </location>
    <ligand>
        <name>ATP</name>
        <dbReference type="ChEBI" id="CHEBI:30616"/>
    </ligand>
</feature>
<dbReference type="EMBL" id="BX571857">
    <property type="protein sequence ID" value="CAG41773.1"/>
    <property type="molecule type" value="Genomic_DNA"/>
</dbReference>
<dbReference type="RefSeq" id="WP_001290433.1">
    <property type="nucleotide sequence ID" value="NC_002953.3"/>
</dbReference>
<dbReference type="SMR" id="Q6GD89"/>
<dbReference type="KEGG" id="sas:SAS0001"/>
<dbReference type="HOGENOM" id="CLU_026910_3_1_9"/>
<dbReference type="GO" id="GO:0005737">
    <property type="term" value="C:cytoplasm"/>
    <property type="evidence" value="ECO:0007669"/>
    <property type="project" value="UniProtKB-SubCell"/>
</dbReference>
<dbReference type="GO" id="GO:0005886">
    <property type="term" value="C:plasma membrane"/>
    <property type="evidence" value="ECO:0007669"/>
    <property type="project" value="TreeGrafter"/>
</dbReference>
<dbReference type="GO" id="GO:0005524">
    <property type="term" value="F:ATP binding"/>
    <property type="evidence" value="ECO:0007669"/>
    <property type="project" value="UniProtKB-UniRule"/>
</dbReference>
<dbReference type="GO" id="GO:0016887">
    <property type="term" value="F:ATP hydrolysis activity"/>
    <property type="evidence" value="ECO:0007669"/>
    <property type="project" value="InterPro"/>
</dbReference>
<dbReference type="GO" id="GO:0003688">
    <property type="term" value="F:DNA replication origin binding"/>
    <property type="evidence" value="ECO:0007669"/>
    <property type="project" value="UniProtKB-UniRule"/>
</dbReference>
<dbReference type="GO" id="GO:0008289">
    <property type="term" value="F:lipid binding"/>
    <property type="evidence" value="ECO:0007669"/>
    <property type="project" value="UniProtKB-KW"/>
</dbReference>
<dbReference type="GO" id="GO:0006270">
    <property type="term" value="P:DNA replication initiation"/>
    <property type="evidence" value="ECO:0007669"/>
    <property type="project" value="UniProtKB-UniRule"/>
</dbReference>
<dbReference type="GO" id="GO:0006275">
    <property type="term" value="P:regulation of DNA replication"/>
    <property type="evidence" value="ECO:0007669"/>
    <property type="project" value="UniProtKB-UniRule"/>
</dbReference>
<dbReference type="CDD" id="cd00009">
    <property type="entry name" value="AAA"/>
    <property type="match status" value="1"/>
</dbReference>
<dbReference type="CDD" id="cd06571">
    <property type="entry name" value="Bac_DnaA_C"/>
    <property type="match status" value="1"/>
</dbReference>
<dbReference type="FunFam" id="1.10.1750.10:FF:000003">
    <property type="entry name" value="Chromosomal replication initiator protein DnaA"/>
    <property type="match status" value="1"/>
</dbReference>
<dbReference type="FunFam" id="1.10.8.60:FF:000003">
    <property type="entry name" value="Chromosomal replication initiator protein DnaA"/>
    <property type="match status" value="1"/>
</dbReference>
<dbReference type="FunFam" id="3.40.50.300:FF:000150">
    <property type="entry name" value="Chromosomal replication initiator protein DnaA"/>
    <property type="match status" value="1"/>
</dbReference>
<dbReference type="Gene3D" id="1.10.1750.10">
    <property type="match status" value="1"/>
</dbReference>
<dbReference type="Gene3D" id="1.10.8.60">
    <property type="match status" value="1"/>
</dbReference>
<dbReference type="Gene3D" id="3.30.300.180">
    <property type="match status" value="1"/>
</dbReference>
<dbReference type="Gene3D" id="3.40.50.300">
    <property type="entry name" value="P-loop containing nucleotide triphosphate hydrolases"/>
    <property type="match status" value="1"/>
</dbReference>
<dbReference type="HAMAP" id="MF_00377">
    <property type="entry name" value="DnaA_bact"/>
    <property type="match status" value="1"/>
</dbReference>
<dbReference type="InterPro" id="IPR003593">
    <property type="entry name" value="AAA+_ATPase"/>
</dbReference>
<dbReference type="InterPro" id="IPR001957">
    <property type="entry name" value="Chromosome_initiator_DnaA"/>
</dbReference>
<dbReference type="InterPro" id="IPR020591">
    <property type="entry name" value="Chromosome_initiator_DnaA-like"/>
</dbReference>
<dbReference type="InterPro" id="IPR018312">
    <property type="entry name" value="Chromosome_initiator_DnaA_CS"/>
</dbReference>
<dbReference type="InterPro" id="IPR013159">
    <property type="entry name" value="DnaA_C"/>
</dbReference>
<dbReference type="InterPro" id="IPR013317">
    <property type="entry name" value="DnaA_dom"/>
</dbReference>
<dbReference type="InterPro" id="IPR024633">
    <property type="entry name" value="DnaA_N_dom"/>
</dbReference>
<dbReference type="InterPro" id="IPR038454">
    <property type="entry name" value="DnaA_N_sf"/>
</dbReference>
<dbReference type="InterPro" id="IPR027417">
    <property type="entry name" value="P-loop_NTPase"/>
</dbReference>
<dbReference type="InterPro" id="IPR010921">
    <property type="entry name" value="Trp_repressor/repl_initiator"/>
</dbReference>
<dbReference type="NCBIfam" id="TIGR00362">
    <property type="entry name" value="DnaA"/>
    <property type="match status" value="1"/>
</dbReference>
<dbReference type="PANTHER" id="PTHR30050">
    <property type="entry name" value="CHROMOSOMAL REPLICATION INITIATOR PROTEIN DNAA"/>
    <property type="match status" value="1"/>
</dbReference>
<dbReference type="PANTHER" id="PTHR30050:SF2">
    <property type="entry name" value="CHROMOSOMAL REPLICATION INITIATOR PROTEIN DNAA"/>
    <property type="match status" value="1"/>
</dbReference>
<dbReference type="Pfam" id="PF00308">
    <property type="entry name" value="Bac_DnaA"/>
    <property type="match status" value="1"/>
</dbReference>
<dbReference type="Pfam" id="PF08299">
    <property type="entry name" value="Bac_DnaA_C"/>
    <property type="match status" value="1"/>
</dbReference>
<dbReference type="Pfam" id="PF11638">
    <property type="entry name" value="DnaA_N"/>
    <property type="match status" value="1"/>
</dbReference>
<dbReference type="PRINTS" id="PR00051">
    <property type="entry name" value="DNAA"/>
</dbReference>
<dbReference type="SMART" id="SM00382">
    <property type="entry name" value="AAA"/>
    <property type="match status" value="1"/>
</dbReference>
<dbReference type="SMART" id="SM00760">
    <property type="entry name" value="Bac_DnaA_C"/>
    <property type="match status" value="1"/>
</dbReference>
<dbReference type="SUPFAM" id="SSF52540">
    <property type="entry name" value="P-loop containing nucleoside triphosphate hydrolases"/>
    <property type="match status" value="1"/>
</dbReference>
<dbReference type="SUPFAM" id="SSF48295">
    <property type="entry name" value="TrpR-like"/>
    <property type="match status" value="1"/>
</dbReference>
<dbReference type="PROSITE" id="PS01008">
    <property type="entry name" value="DNAA"/>
    <property type="match status" value="1"/>
</dbReference>
<evidence type="ECO:0000255" key="1">
    <source>
        <dbReference type="HAMAP-Rule" id="MF_00377"/>
    </source>
</evidence>
<reference key="1">
    <citation type="journal article" date="2004" name="Proc. Natl. Acad. Sci. U.S.A.">
        <title>Complete genomes of two clinical Staphylococcus aureus strains: evidence for the rapid evolution of virulence and drug resistance.</title>
        <authorList>
            <person name="Holden M.T.G."/>
            <person name="Feil E.J."/>
            <person name="Lindsay J.A."/>
            <person name="Peacock S.J."/>
            <person name="Day N.P.J."/>
            <person name="Enright M.C."/>
            <person name="Foster T.J."/>
            <person name="Moore C.E."/>
            <person name="Hurst L."/>
            <person name="Atkin R."/>
            <person name="Barron A."/>
            <person name="Bason N."/>
            <person name="Bentley S.D."/>
            <person name="Chillingworth C."/>
            <person name="Chillingworth T."/>
            <person name="Churcher C."/>
            <person name="Clark L."/>
            <person name="Corton C."/>
            <person name="Cronin A."/>
            <person name="Doggett J."/>
            <person name="Dowd L."/>
            <person name="Feltwell T."/>
            <person name="Hance Z."/>
            <person name="Harris B."/>
            <person name="Hauser H."/>
            <person name="Holroyd S."/>
            <person name="Jagels K."/>
            <person name="James K.D."/>
            <person name="Lennard N."/>
            <person name="Line A."/>
            <person name="Mayes R."/>
            <person name="Moule S."/>
            <person name="Mungall K."/>
            <person name="Ormond D."/>
            <person name="Quail M.A."/>
            <person name="Rabbinowitsch E."/>
            <person name="Rutherford K.M."/>
            <person name="Sanders M."/>
            <person name="Sharp S."/>
            <person name="Simmonds M."/>
            <person name="Stevens K."/>
            <person name="Whitehead S."/>
            <person name="Barrell B.G."/>
            <person name="Spratt B.G."/>
            <person name="Parkhill J."/>
        </authorList>
    </citation>
    <scope>NUCLEOTIDE SEQUENCE [LARGE SCALE GENOMIC DNA]</scope>
    <source>
        <strain>MSSA476</strain>
    </source>
</reference>
<organism>
    <name type="scientific">Staphylococcus aureus (strain MSSA476)</name>
    <dbReference type="NCBI Taxonomy" id="282459"/>
    <lineage>
        <taxon>Bacteria</taxon>
        <taxon>Bacillati</taxon>
        <taxon>Bacillota</taxon>
        <taxon>Bacilli</taxon>
        <taxon>Bacillales</taxon>
        <taxon>Staphylococcaceae</taxon>
        <taxon>Staphylococcus</taxon>
    </lineage>
</organism>
<keyword id="KW-0067">ATP-binding</keyword>
<keyword id="KW-0963">Cytoplasm</keyword>
<keyword id="KW-0235">DNA replication</keyword>
<keyword id="KW-0238">DNA-binding</keyword>
<keyword id="KW-0446">Lipid-binding</keyword>
<keyword id="KW-0547">Nucleotide-binding</keyword>
<accession>Q6GD89</accession>
<name>DNAA_STAAS</name>
<gene>
    <name evidence="1" type="primary">dnaA</name>
    <name type="ordered locus">SAS0001</name>
</gene>
<comment type="function">
    <text evidence="1">Plays an essential role in the initiation and regulation of chromosomal replication. ATP-DnaA binds to the origin of replication (oriC) to initiate formation of the DNA replication initiation complex once per cell cycle. Binds the DnaA box (a 9 base pair repeat at the origin) and separates the double-stranded (ds)DNA. Forms a right-handed helical filament on oriC DNA; dsDNA binds to the exterior of the filament while single-stranded (ss)DNA is stabiized in the filament's interior. The ATP-DnaA-oriC complex binds and stabilizes one strand of the AT-rich DNA unwinding element (DUE), permitting loading of DNA polymerase. After initiation quickly degrades to an ADP-DnaA complex that is not apt for DNA replication. Binds acidic phospholipids.</text>
</comment>
<comment type="subunit">
    <text evidence="1">Oligomerizes as a right-handed, spiral filament on DNA at oriC.</text>
</comment>
<comment type="subcellular location">
    <subcellularLocation>
        <location evidence="1">Cytoplasm</location>
    </subcellularLocation>
</comment>
<comment type="domain">
    <text evidence="1">Domain I is involved in oligomerization and binding regulators, domain II is flexibile and of varying length in different bacteria, domain III forms the AAA+ region, while domain IV binds dsDNA.</text>
</comment>
<comment type="similarity">
    <text evidence="1">Belongs to the DnaA family.</text>
</comment>